<name>ELMD3_HUMAN</name>
<accession>Q96FG2</accession>
<accession>B8ZZD6</accession>
<accession>D6W5K4</accession>
<accession>Q2M1K3</accession>
<accession>Q2XSU3</accession>
<accession>Q2XSU4</accession>
<accession>Q8NAC1</accession>
<accession>Q8TCK4</accession>
<accession>Q8WV70</accession>
<accession>Q8WY75</accession>
<accession>Q9H6Q8</accession>
<feature type="chain" id="PRO_0000274903" description="ELMO domain-containing protein 3">
    <location>
        <begin position="1"/>
        <end position="381"/>
    </location>
</feature>
<feature type="domain" description="ELMO" evidence="2">
    <location>
        <begin position="170"/>
        <end position="324"/>
    </location>
</feature>
<feature type="region of interest" description="Disordered" evidence="3">
    <location>
        <begin position="1"/>
        <end position="31"/>
    </location>
</feature>
<feature type="compositionally biased region" description="Basic and acidic residues" evidence="3">
    <location>
        <begin position="9"/>
        <end position="19"/>
    </location>
</feature>
<feature type="splice variant" id="VSP_022918" description="In isoform 3." evidence="7">
    <location>
        <begin position="162"/>
        <end position="381"/>
    </location>
</feature>
<feature type="splice variant" id="VSP_022919" description="In isoform 5." evidence="8 9">
    <original>GLDSQDPVHGRVLQTIYKKLTGS</original>
    <variation>ECNASPQGSCCICGWARPCVLTL</variation>
    <location>
        <begin position="163"/>
        <end position="185"/>
    </location>
</feature>
<feature type="splice variant" id="VSP_022920" description="In isoform 5." evidence="8 9">
    <location>
        <begin position="186"/>
        <end position="381"/>
    </location>
</feature>
<feature type="splice variant" id="VSP_022922" description="In isoform 2." evidence="9">
    <original>QFPFCLMS</original>
    <variation>IERNQGKG</variation>
    <location>
        <begin position="247"/>
        <end position="254"/>
    </location>
</feature>
<feature type="splice variant" id="VSP_022923" description="In isoform 2." evidence="9">
    <location>
        <begin position="255"/>
        <end position="381"/>
    </location>
</feature>
<feature type="splice variant" id="VSP_022924" description="In isoform 6." evidence="6">
    <original>ELEVLAKKSPRRLLKTLELYLARVSKGQASLLGAQKCYGPEAPPFKDLTFTGESDLQSHSSEGVWLI</original>
    <variation>GVLFLLGRPRLNAQCPRSREPKVVARLVLAAVLPHPHFLKFQLTKISITHPLESASSPFSALTVALFWSYTYDKHIF</variation>
    <location>
        <begin position="315"/>
        <end position="381"/>
    </location>
</feature>
<feature type="sequence variant" id="VAR_030362" description="In dbSNP:rs7564372.">
    <original>R</original>
    <variation>C</variation>
    <location>
        <position position="66"/>
    </location>
</feature>
<feature type="sequence variant" id="VAR_030363" description="In dbSNP:rs955592.">
    <original>T</original>
    <variation>I</variation>
    <location>
        <position position="70"/>
    </location>
</feature>
<feature type="sequence variant" id="VAR_086112" description="In DFNA81; uncertain significance; perturbed subcellular location with loss of colocalization with F-actin in the cytoplasm and concentration in the nucleus; may also have a shorter half-life than the wild-type protein." evidence="5">
    <original>H</original>
    <variation>R</variation>
    <location>
        <position position="171"/>
    </location>
</feature>
<feature type="sequence variant" id="VAR_070125" description="In DFNB88; uncertain significance; perturbed subcellular location with loss of targeting to stereocilia and concentration in the nucleus; loss of ARL2 GAP activity; dbSNP:rs587777040." evidence="4">
    <original>L</original>
    <variation>S</variation>
    <location>
        <position position="265"/>
    </location>
</feature>
<feature type="sequence conflict" description="In Ref. 2; BAB15195." evidence="10" ref="2">
    <original>R</original>
    <variation>K</variation>
    <location>
        <position position="40"/>
    </location>
</feature>
<feature type="sequence conflict" description="In Ref. 3; AAG23776." evidence="10" ref="3">
    <original>S</original>
    <variation>G</variation>
    <location>
        <position position="105"/>
    </location>
</feature>
<feature type="sequence conflict" description="In Ref. 6; AAI12325." evidence="10" ref="6">
    <original>A</original>
    <variation>T</variation>
    <location>
        <position position="290"/>
    </location>
</feature>
<feature type="sequence conflict" description="In Ref. 6; AAH10991." evidence="10" ref="6">
    <original>R</original>
    <variation>L</variation>
    <location>
        <position position="325"/>
    </location>
</feature>
<comment type="function">
    <text evidence="4">Acts as a GTPase-activating protein (GAP) for ARL2 with low specific activity.</text>
</comment>
<comment type="interaction">
    <interactant intactId="EBI-10285740">
        <id>Q96FG2</id>
    </interactant>
    <interactant intactId="EBI-1045155">
        <id>P43360</id>
        <label>MAGEA6</label>
    </interactant>
    <organismsDiffer>false</organismsDiffer>
    <experiments>3</experiments>
</comment>
<comment type="subcellular location">
    <subcellularLocation>
        <location evidence="4">Cell projection</location>
        <location evidence="4">Stereocilium</location>
    </subcellularLocation>
    <subcellularLocation>
        <location evidence="1">Cell projection</location>
        <location evidence="1">Kinocilium</location>
    </subcellularLocation>
    <subcellularLocation>
        <location evidence="4 5">Cytoplasm</location>
        <location evidence="4 5">Cytoskeleton</location>
    </subcellularLocation>
    <text evidence="5">Also present in the cuticular plate of auditory hair cells. Expressed along the length of the stereocilia, but excluded from the very tip (By similarity). Colocalizes with F-actin cytoskeleton.</text>
</comment>
<comment type="alternative products">
    <event type="alternative splicing"/>
    <isoform>
        <id>Q96FG2-1</id>
        <name>1</name>
        <name>B/C/D</name>
        <sequence type="displayed"/>
    </isoform>
    <isoform>
        <id>Q96FG2-2</id>
        <name>2</name>
        <sequence type="described" ref="VSP_022922 VSP_022923"/>
    </isoform>
    <isoform>
        <id>Q96FG2-3</id>
        <name>3</name>
        <sequence type="described" ref="VSP_022918"/>
    </isoform>
    <isoform>
        <id>Q96FG2-5</id>
        <name>5</name>
        <sequence type="described" ref="VSP_022919 VSP_022920"/>
    </isoform>
    <isoform>
        <id>Q96FG2-6</id>
        <name>6</name>
        <name>A</name>
        <sequence type="described" ref="VSP_022924"/>
    </isoform>
</comment>
<comment type="tissue specificity">
    <text evidence="4">Both isoform 1 and isoform 6 are widely expressed.</text>
</comment>
<comment type="disease" evidence="4">
    <disease id="DI-03888">
        <name>Deafness, autosomal recessive, 88</name>
        <acronym>DFNB88</acronym>
        <description>A form of non-syndromic deafness characterized by prelingual onset of severe to profound mixed conductive and sensorineural hearing loss.</description>
        <dbReference type="MIM" id="615429"/>
    </disease>
    <text>The disease may be caused by variants affecting the gene represented in this entry.</text>
</comment>
<comment type="disease" evidence="5">
    <disease id="DI-06210">
        <name>Deafness, autosomal dominant, 81</name>
        <acronym>DFNA81</acronym>
        <description>A form of non-syndromic, sensorineural hearing loss. Sensorineural hearing loss results from damage to the neural receptors of the inner ear, the nerve pathways to the brain, or the area of the brain that receives sound information. DNFA81 is characterized by postlingual onset of slowly progressive deafness.</description>
        <dbReference type="MIM" id="619500"/>
    </disease>
    <text>The disease may be caused by variants affecting the gene represented in this entry.</text>
</comment>
<evidence type="ECO:0000250" key="1"/>
<evidence type="ECO:0000255" key="2">
    <source>
        <dbReference type="PROSITE-ProRule" id="PRU00664"/>
    </source>
</evidence>
<evidence type="ECO:0000256" key="3">
    <source>
        <dbReference type="SAM" id="MobiDB-lite"/>
    </source>
</evidence>
<evidence type="ECO:0000269" key="4">
    <source>
    </source>
</evidence>
<evidence type="ECO:0000269" key="5">
    <source>
    </source>
</evidence>
<evidence type="ECO:0000303" key="6">
    <source>
    </source>
</evidence>
<evidence type="ECO:0000303" key="7">
    <source>
    </source>
</evidence>
<evidence type="ECO:0000303" key="8">
    <source>
    </source>
</evidence>
<evidence type="ECO:0000303" key="9">
    <source ref="1"/>
</evidence>
<evidence type="ECO:0000305" key="10"/>
<sequence>MNEKSCSFHSKEELRDGQGERLSAGYSPSYDKDKSVLAFRGIPISELKNHGILQALTTEAYEWEPRVVSTEVVRAQEEWEAVDTIQPETGSQASSEQPGQLISFSEALQHFQTVDLSPFKKRIQPTIRRTGLAALRHYLFGPPKLHQRLREERDLVLTIAQCGLDSQDPVHGRVLQTIYKKLTGSKFDCALHGNHWEDLGFQGANPATDLRGAGFLALLHLLYLVMDSKTLPMAQEIFRLSRHHIQQFPFCLMSVNITHIAIQALREECLSRECNRQQKVIPVVNSFYAATFLHLAHVWRTQRKTISDSGFVLKELEVLAKKSPRRLLKTLELYLARVSKGQASLLGAQKCYGPEAPPFKDLTFTGESDLQSHSSEGVWLI</sequence>
<gene>
    <name type="primary">ELMOD3</name>
    <name type="synonym">RBED1</name>
    <name type="synonym">RBM29</name>
    <name type="ORF">PP4068</name>
</gene>
<reference key="1">
    <citation type="submission" date="2005-10" db="EMBL/GenBank/DDBJ databases">
        <title>RBED1, an AP1-inhibiting protein.</title>
        <authorList>
            <person name="Wang P."/>
            <person name="Deng W."/>
            <person name="Lu Y."/>
            <person name="He P."/>
            <person name="Gao X."/>
            <person name="Shi T."/>
            <person name="Ma D."/>
        </authorList>
    </citation>
    <scope>NUCLEOTIDE SEQUENCE [MRNA] (ISOFORMS 2 AND 5)</scope>
</reference>
<reference key="2">
    <citation type="journal article" date="2004" name="Nat. Genet.">
        <title>Complete sequencing and characterization of 21,243 full-length human cDNAs.</title>
        <authorList>
            <person name="Ota T."/>
            <person name="Suzuki Y."/>
            <person name="Nishikawa T."/>
            <person name="Otsuki T."/>
            <person name="Sugiyama T."/>
            <person name="Irie R."/>
            <person name="Wakamatsu A."/>
            <person name="Hayashi K."/>
            <person name="Sato H."/>
            <person name="Nagai K."/>
            <person name="Kimura K."/>
            <person name="Makita H."/>
            <person name="Sekine M."/>
            <person name="Obayashi M."/>
            <person name="Nishi T."/>
            <person name="Shibahara T."/>
            <person name="Tanaka T."/>
            <person name="Ishii S."/>
            <person name="Yamamoto J."/>
            <person name="Saito K."/>
            <person name="Kawai Y."/>
            <person name="Isono Y."/>
            <person name="Nakamura Y."/>
            <person name="Nagahari K."/>
            <person name="Murakami K."/>
            <person name="Yasuda T."/>
            <person name="Iwayanagi T."/>
            <person name="Wagatsuma M."/>
            <person name="Shiratori A."/>
            <person name="Sudo H."/>
            <person name="Hosoiri T."/>
            <person name="Kaku Y."/>
            <person name="Kodaira H."/>
            <person name="Kondo H."/>
            <person name="Sugawara M."/>
            <person name="Takahashi M."/>
            <person name="Kanda K."/>
            <person name="Yokoi T."/>
            <person name="Furuya T."/>
            <person name="Kikkawa E."/>
            <person name="Omura Y."/>
            <person name="Abe K."/>
            <person name="Kamihara K."/>
            <person name="Katsuta N."/>
            <person name="Sato K."/>
            <person name="Tanikawa M."/>
            <person name="Yamazaki M."/>
            <person name="Ninomiya K."/>
            <person name="Ishibashi T."/>
            <person name="Yamashita H."/>
            <person name="Murakawa K."/>
            <person name="Fujimori K."/>
            <person name="Tanai H."/>
            <person name="Kimata M."/>
            <person name="Watanabe M."/>
            <person name="Hiraoka S."/>
            <person name="Chiba Y."/>
            <person name="Ishida S."/>
            <person name="Ono Y."/>
            <person name="Takiguchi S."/>
            <person name="Watanabe S."/>
            <person name="Yosida M."/>
            <person name="Hotuta T."/>
            <person name="Kusano J."/>
            <person name="Kanehori K."/>
            <person name="Takahashi-Fujii A."/>
            <person name="Hara H."/>
            <person name="Tanase T.-O."/>
            <person name="Nomura Y."/>
            <person name="Togiya S."/>
            <person name="Komai F."/>
            <person name="Hara R."/>
            <person name="Takeuchi K."/>
            <person name="Arita M."/>
            <person name="Imose N."/>
            <person name="Musashino K."/>
            <person name="Yuuki H."/>
            <person name="Oshima A."/>
            <person name="Sasaki N."/>
            <person name="Aotsuka S."/>
            <person name="Yoshikawa Y."/>
            <person name="Matsunawa H."/>
            <person name="Ichihara T."/>
            <person name="Shiohata N."/>
            <person name="Sano S."/>
            <person name="Moriya S."/>
            <person name="Momiyama H."/>
            <person name="Satoh N."/>
            <person name="Takami S."/>
            <person name="Terashima Y."/>
            <person name="Suzuki O."/>
            <person name="Nakagawa S."/>
            <person name="Senoh A."/>
            <person name="Mizoguchi H."/>
            <person name="Goto Y."/>
            <person name="Shimizu F."/>
            <person name="Wakebe H."/>
            <person name="Hishigaki H."/>
            <person name="Watanabe T."/>
            <person name="Sugiyama A."/>
            <person name="Takemoto M."/>
            <person name="Kawakami B."/>
            <person name="Yamazaki M."/>
            <person name="Watanabe K."/>
            <person name="Kumagai A."/>
            <person name="Itakura S."/>
            <person name="Fukuzumi Y."/>
            <person name="Fujimori Y."/>
            <person name="Komiyama M."/>
            <person name="Tashiro H."/>
            <person name="Tanigami A."/>
            <person name="Fujiwara T."/>
            <person name="Ono T."/>
            <person name="Yamada K."/>
            <person name="Fujii Y."/>
            <person name="Ozaki K."/>
            <person name="Hirao M."/>
            <person name="Ohmori Y."/>
            <person name="Kawabata A."/>
            <person name="Hikiji T."/>
            <person name="Kobatake N."/>
            <person name="Inagaki H."/>
            <person name="Ikema Y."/>
            <person name="Okamoto S."/>
            <person name="Okitani R."/>
            <person name="Kawakami T."/>
            <person name="Noguchi S."/>
            <person name="Itoh T."/>
            <person name="Shigeta K."/>
            <person name="Senba T."/>
            <person name="Matsumura K."/>
            <person name="Nakajima Y."/>
            <person name="Mizuno T."/>
            <person name="Morinaga M."/>
            <person name="Sasaki M."/>
            <person name="Togashi T."/>
            <person name="Oyama M."/>
            <person name="Hata H."/>
            <person name="Watanabe M."/>
            <person name="Komatsu T."/>
            <person name="Mizushima-Sugano J."/>
            <person name="Satoh T."/>
            <person name="Shirai Y."/>
            <person name="Takahashi Y."/>
            <person name="Nakagawa K."/>
            <person name="Okumura K."/>
            <person name="Nagase T."/>
            <person name="Nomura N."/>
            <person name="Kikuchi H."/>
            <person name="Masuho Y."/>
            <person name="Yamashita R."/>
            <person name="Nakai K."/>
            <person name="Yada T."/>
            <person name="Nakamura Y."/>
            <person name="Ohara O."/>
            <person name="Isogai T."/>
            <person name="Sugano S."/>
        </authorList>
    </citation>
    <scope>NUCLEOTIDE SEQUENCE [LARGE SCALE MRNA] (ISOFORM 1)</scope>
    <source>
        <tissue>Hepatoma</tissue>
        <tissue>Spleen</tissue>
    </source>
</reference>
<reference key="3">
    <citation type="journal article" date="2004" name="Proc. Natl. Acad. Sci. U.S.A.">
        <title>Large-scale cDNA transfection screening for genes related to cancer development and progression.</title>
        <authorList>
            <person name="Wan D."/>
            <person name="Gong Y."/>
            <person name="Qin W."/>
            <person name="Zhang P."/>
            <person name="Li J."/>
            <person name="Wei L."/>
            <person name="Zhou X."/>
            <person name="Li H."/>
            <person name="Qiu X."/>
            <person name="Zhong F."/>
            <person name="He L."/>
            <person name="Yu J."/>
            <person name="Yao G."/>
            <person name="Jiang H."/>
            <person name="Qian L."/>
            <person name="Yu Y."/>
            <person name="Shu H."/>
            <person name="Chen X."/>
            <person name="Xu H."/>
            <person name="Guo M."/>
            <person name="Pan Z."/>
            <person name="Chen Y."/>
            <person name="Ge C."/>
            <person name="Yang S."/>
            <person name="Gu J."/>
        </authorList>
    </citation>
    <scope>NUCLEOTIDE SEQUENCE [LARGE SCALE MRNA] (ISOFORM 3)</scope>
</reference>
<reference key="4">
    <citation type="journal article" date="2005" name="Nature">
        <title>Generation and annotation of the DNA sequences of human chromosomes 2 and 4.</title>
        <authorList>
            <person name="Hillier L.W."/>
            <person name="Graves T.A."/>
            <person name="Fulton R.S."/>
            <person name="Fulton L.A."/>
            <person name="Pepin K.H."/>
            <person name="Minx P."/>
            <person name="Wagner-McPherson C."/>
            <person name="Layman D."/>
            <person name="Wylie K."/>
            <person name="Sekhon M."/>
            <person name="Becker M.C."/>
            <person name="Fewell G.A."/>
            <person name="Delehaunty K.D."/>
            <person name="Miner T.L."/>
            <person name="Nash W.E."/>
            <person name="Kremitzki C."/>
            <person name="Oddy L."/>
            <person name="Du H."/>
            <person name="Sun H."/>
            <person name="Bradshaw-Cordum H."/>
            <person name="Ali J."/>
            <person name="Carter J."/>
            <person name="Cordes M."/>
            <person name="Harris A."/>
            <person name="Isak A."/>
            <person name="van Brunt A."/>
            <person name="Nguyen C."/>
            <person name="Du F."/>
            <person name="Courtney L."/>
            <person name="Kalicki J."/>
            <person name="Ozersky P."/>
            <person name="Abbott S."/>
            <person name="Armstrong J."/>
            <person name="Belter E.A."/>
            <person name="Caruso L."/>
            <person name="Cedroni M."/>
            <person name="Cotton M."/>
            <person name="Davidson T."/>
            <person name="Desai A."/>
            <person name="Elliott G."/>
            <person name="Erb T."/>
            <person name="Fronick C."/>
            <person name="Gaige T."/>
            <person name="Haakenson W."/>
            <person name="Haglund K."/>
            <person name="Holmes A."/>
            <person name="Harkins R."/>
            <person name="Kim K."/>
            <person name="Kruchowski S.S."/>
            <person name="Strong C.M."/>
            <person name="Grewal N."/>
            <person name="Goyea E."/>
            <person name="Hou S."/>
            <person name="Levy A."/>
            <person name="Martinka S."/>
            <person name="Mead K."/>
            <person name="McLellan M.D."/>
            <person name="Meyer R."/>
            <person name="Randall-Maher J."/>
            <person name="Tomlinson C."/>
            <person name="Dauphin-Kohlberg S."/>
            <person name="Kozlowicz-Reilly A."/>
            <person name="Shah N."/>
            <person name="Swearengen-Shahid S."/>
            <person name="Snider J."/>
            <person name="Strong J.T."/>
            <person name="Thompson J."/>
            <person name="Yoakum M."/>
            <person name="Leonard S."/>
            <person name="Pearman C."/>
            <person name="Trani L."/>
            <person name="Radionenko M."/>
            <person name="Waligorski J.E."/>
            <person name="Wang C."/>
            <person name="Rock S.M."/>
            <person name="Tin-Wollam A.-M."/>
            <person name="Maupin R."/>
            <person name="Latreille P."/>
            <person name="Wendl M.C."/>
            <person name="Yang S.-P."/>
            <person name="Pohl C."/>
            <person name="Wallis J.W."/>
            <person name="Spieth J."/>
            <person name="Bieri T.A."/>
            <person name="Berkowicz N."/>
            <person name="Nelson J.O."/>
            <person name="Osborne J."/>
            <person name="Ding L."/>
            <person name="Meyer R."/>
            <person name="Sabo A."/>
            <person name="Shotland Y."/>
            <person name="Sinha P."/>
            <person name="Wohldmann P.E."/>
            <person name="Cook L.L."/>
            <person name="Hickenbotham M.T."/>
            <person name="Eldred J."/>
            <person name="Williams D."/>
            <person name="Jones T.A."/>
            <person name="She X."/>
            <person name="Ciccarelli F.D."/>
            <person name="Izaurralde E."/>
            <person name="Taylor J."/>
            <person name="Schmutz J."/>
            <person name="Myers R.M."/>
            <person name="Cox D.R."/>
            <person name="Huang X."/>
            <person name="McPherson J.D."/>
            <person name="Mardis E.R."/>
            <person name="Clifton S.W."/>
            <person name="Warren W.C."/>
            <person name="Chinwalla A.T."/>
            <person name="Eddy S.R."/>
            <person name="Marra M.A."/>
            <person name="Ovcharenko I."/>
            <person name="Furey T.S."/>
            <person name="Miller W."/>
            <person name="Eichler E.E."/>
            <person name="Bork P."/>
            <person name="Suyama M."/>
            <person name="Torrents D."/>
            <person name="Waterston R.H."/>
            <person name="Wilson R.K."/>
        </authorList>
    </citation>
    <scope>NUCLEOTIDE SEQUENCE [LARGE SCALE GENOMIC DNA]</scope>
</reference>
<reference key="5">
    <citation type="submission" date="2005-09" db="EMBL/GenBank/DDBJ databases">
        <authorList>
            <person name="Mural R.J."/>
            <person name="Istrail S."/>
            <person name="Sutton G.G."/>
            <person name="Florea L."/>
            <person name="Halpern A.L."/>
            <person name="Mobarry C.M."/>
            <person name="Lippert R."/>
            <person name="Walenz B."/>
            <person name="Shatkay H."/>
            <person name="Dew I."/>
            <person name="Miller J.R."/>
            <person name="Flanigan M.J."/>
            <person name="Edwards N.J."/>
            <person name="Bolanos R."/>
            <person name="Fasulo D."/>
            <person name="Halldorsson B.V."/>
            <person name="Hannenhalli S."/>
            <person name="Turner R."/>
            <person name="Yooseph S."/>
            <person name="Lu F."/>
            <person name="Nusskern D.R."/>
            <person name="Shue B.C."/>
            <person name="Zheng X.H."/>
            <person name="Zhong F."/>
            <person name="Delcher A.L."/>
            <person name="Huson D.H."/>
            <person name="Kravitz S.A."/>
            <person name="Mouchard L."/>
            <person name="Reinert K."/>
            <person name="Remington K.A."/>
            <person name="Clark A.G."/>
            <person name="Waterman M.S."/>
            <person name="Eichler E.E."/>
            <person name="Adams M.D."/>
            <person name="Hunkapiller M.W."/>
            <person name="Myers E.W."/>
            <person name="Venter J.C."/>
        </authorList>
    </citation>
    <scope>NUCLEOTIDE SEQUENCE [LARGE SCALE GENOMIC DNA]</scope>
</reference>
<reference key="6">
    <citation type="journal article" date="2004" name="Genome Res.">
        <title>The status, quality, and expansion of the NIH full-length cDNA project: the Mammalian Gene Collection (MGC).</title>
        <authorList>
            <consortium name="The MGC Project Team"/>
        </authorList>
    </citation>
    <scope>NUCLEOTIDE SEQUENCE [LARGE SCALE MRNA] (ISOFORMS 1 AND 6)</scope>
    <source>
        <tissue>Brain</tissue>
        <tissue>Lung</tissue>
    </source>
</reference>
<reference key="7">
    <citation type="journal article" date="2007" name="BMC Genomics">
        <title>The full-ORF clone resource of the German cDNA consortium.</title>
        <authorList>
            <person name="Bechtel S."/>
            <person name="Rosenfelder H."/>
            <person name="Duda A."/>
            <person name="Schmidt C.P."/>
            <person name="Ernst U."/>
            <person name="Wellenreuther R."/>
            <person name="Mehrle A."/>
            <person name="Schuster C."/>
            <person name="Bahr A."/>
            <person name="Bloecker H."/>
            <person name="Heubner D."/>
            <person name="Hoerlein A."/>
            <person name="Michel G."/>
            <person name="Wedler H."/>
            <person name="Koehrer K."/>
            <person name="Ottenwaelder B."/>
            <person name="Poustka A."/>
            <person name="Wiemann S."/>
            <person name="Schupp I."/>
        </authorList>
    </citation>
    <scope>NUCLEOTIDE SEQUENCE [LARGE SCALE MRNA] OF 35-381 (ISOFORM 5)</scope>
    <source>
        <tissue>Lymph node</tissue>
    </source>
</reference>
<reference key="8">
    <citation type="journal article" date="2013" name="PLoS Genet.">
        <title>An alteration in ELMOD3, an Arl2 GTPase-activating protein, is associated with hearing impairment in humans.</title>
        <authorList>
            <person name="Jaworek T.J."/>
            <person name="Richard E.M."/>
            <person name="Ivanova A.A."/>
            <person name="Giese A.P."/>
            <person name="Choo D.I."/>
            <person name="Khan S.N."/>
            <person name="Riazuddin S."/>
            <person name="Kahn R.A."/>
            <person name="Riazuddin S."/>
        </authorList>
    </citation>
    <scope>INVOLVEMENT IN DFNA88</scope>
    <scope>VARIANT DFNB88 SER-265</scope>
    <scope>FUNCTION</scope>
    <scope>SUBCELLULAR LOCATION</scope>
    <scope>IDENTIFICATION OF ISOFORMS 1 AND 6</scope>
    <scope>TISSUE SPECIFICITY</scope>
</reference>
<reference key="9">
    <citation type="journal article" date="2018" name="Hum. Genet.">
        <title>ELMOD3, a novel causative gene, associated with human autosomal dominant nonsyndromic and progressive hearing loss.</title>
        <authorList>
            <person name="Li W."/>
            <person name="Sun J."/>
            <person name="Ling J."/>
            <person name="Li J."/>
            <person name="He C."/>
            <person name="Liu Y."/>
            <person name="Chen H."/>
            <person name="Men M."/>
            <person name="Niu Z."/>
            <person name="Deng Y."/>
            <person name="Li M."/>
            <person name="Li T."/>
            <person name="Wen J."/>
            <person name="Sang S."/>
            <person name="Li H."/>
            <person name="Wan Z."/>
            <person name="Richard E.M."/>
            <person name="Chapagain P."/>
            <person name="Yan D."/>
            <person name="Liu X.Z."/>
            <person name="Mei L."/>
            <person name="Feng Y."/>
        </authorList>
    </citation>
    <scope>INVOLVEMENT IN DFNA81</scope>
    <scope>VARIANT DFNA81 ARG-171</scope>
    <scope>CHARACTERIZATION OF VARIANT DFNA81 ARG-171</scope>
    <scope>SUBCELLULAR LOCATION</scope>
</reference>
<dbReference type="EMBL" id="DQ256726">
    <property type="protein sequence ID" value="ABB69067.1"/>
    <property type="molecule type" value="mRNA"/>
</dbReference>
<dbReference type="EMBL" id="DQ256727">
    <property type="protein sequence ID" value="ABB69068.1"/>
    <property type="molecule type" value="mRNA"/>
</dbReference>
<dbReference type="EMBL" id="AK025630">
    <property type="protein sequence ID" value="BAB15195.1"/>
    <property type="molecule type" value="mRNA"/>
</dbReference>
<dbReference type="EMBL" id="AF258573">
    <property type="protein sequence ID" value="AAG23776.1"/>
    <property type="molecule type" value="mRNA"/>
</dbReference>
<dbReference type="EMBL" id="AC062037">
    <property type="protein sequence ID" value="AAY24127.1"/>
    <property type="molecule type" value="Genomic_DNA"/>
</dbReference>
<dbReference type="EMBL" id="CH471053">
    <property type="protein sequence ID" value="EAW99521.1"/>
    <property type="molecule type" value="Genomic_DNA"/>
</dbReference>
<dbReference type="EMBL" id="CH471053">
    <property type="protein sequence ID" value="EAW99522.1"/>
    <property type="molecule type" value="Genomic_DNA"/>
</dbReference>
<dbReference type="EMBL" id="CH471053">
    <property type="protein sequence ID" value="EAW99523.1"/>
    <property type="molecule type" value="Genomic_DNA"/>
</dbReference>
<dbReference type="EMBL" id="CH471053">
    <property type="protein sequence ID" value="EAW99526.1"/>
    <property type="molecule type" value="Genomic_DNA"/>
</dbReference>
<dbReference type="EMBL" id="CH471053">
    <property type="protein sequence ID" value="EAW99528.1"/>
    <property type="molecule type" value="Genomic_DNA"/>
</dbReference>
<dbReference type="EMBL" id="BC001942">
    <property type="protein sequence ID" value="AAH01942.1"/>
    <property type="molecule type" value="mRNA"/>
</dbReference>
<dbReference type="EMBL" id="BC010991">
    <property type="protein sequence ID" value="AAH10991.1"/>
    <property type="molecule type" value="mRNA"/>
</dbReference>
<dbReference type="EMBL" id="BC018666">
    <property type="protein sequence ID" value="AAH18666.1"/>
    <property type="molecule type" value="mRNA"/>
</dbReference>
<dbReference type="EMBL" id="BC112324">
    <property type="protein sequence ID" value="AAI12325.1"/>
    <property type="molecule type" value="mRNA"/>
</dbReference>
<dbReference type="EMBL" id="AL713718">
    <property type="protein sequence ID" value="CAD28512.1"/>
    <property type="molecule type" value="mRNA"/>
</dbReference>
<dbReference type="CCDS" id="CCDS1973.1">
    <molecule id="Q96FG2-6"/>
</dbReference>
<dbReference type="CCDS" id="CCDS46352.1">
    <molecule id="Q96FG2-1"/>
</dbReference>
<dbReference type="RefSeq" id="NP_001128493.1">
    <molecule id="Q96FG2-1"/>
    <property type="nucleotide sequence ID" value="NM_001135021.2"/>
</dbReference>
<dbReference type="RefSeq" id="NP_001128494.1">
    <molecule id="Q96FG2-1"/>
    <property type="nucleotide sequence ID" value="NM_001135022.2"/>
</dbReference>
<dbReference type="RefSeq" id="NP_001128495.1">
    <molecule id="Q96FG2-1"/>
    <property type="nucleotide sequence ID" value="NM_001135023.2"/>
</dbReference>
<dbReference type="RefSeq" id="NP_001316720.1">
    <molecule id="Q96FG2-1"/>
    <property type="nucleotide sequence ID" value="NM_001329791.2"/>
</dbReference>
<dbReference type="RefSeq" id="NP_001316721.1">
    <molecule id="Q96FG2-1"/>
    <property type="nucleotide sequence ID" value="NM_001329792.2"/>
</dbReference>
<dbReference type="RefSeq" id="NP_001316722.1">
    <molecule id="Q96FG2-1"/>
    <property type="nucleotide sequence ID" value="NM_001329793.2"/>
</dbReference>
<dbReference type="RefSeq" id="XP_024308937.1">
    <molecule id="Q96FG2-6"/>
    <property type="nucleotide sequence ID" value="XM_024453169.2"/>
</dbReference>
<dbReference type="RefSeq" id="XP_024308938.1">
    <molecule id="Q96FG2-6"/>
    <property type="nucleotide sequence ID" value="XM_024453170.2"/>
</dbReference>
<dbReference type="RefSeq" id="XP_024308939.1">
    <molecule id="Q96FG2-6"/>
    <property type="nucleotide sequence ID" value="XM_024453171.2"/>
</dbReference>
<dbReference type="RefSeq" id="XP_047301919.1">
    <molecule id="Q96FG2-6"/>
    <property type="nucleotide sequence ID" value="XM_047445963.1"/>
</dbReference>
<dbReference type="RefSeq" id="XP_047301920.1">
    <molecule id="Q96FG2-6"/>
    <property type="nucleotide sequence ID" value="XM_047445964.1"/>
</dbReference>
<dbReference type="RefSeq" id="XP_047301921.1">
    <molecule id="Q96FG2-6"/>
    <property type="nucleotide sequence ID" value="XM_047445965.1"/>
</dbReference>
<dbReference type="RefSeq" id="XP_047301922.1">
    <molecule id="Q96FG2-6"/>
    <property type="nucleotide sequence ID" value="XM_047445966.1"/>
</dbReference>
<dbReference type="RefSeq" id="XP_047301923.1">
    <molecule id="Q96FG2-6"/>
    <property type="nucleotide sequence ID" value="XM_047445967.1"/>
</dbReference>
<dbReference type="RefSeq" id="XP_047301924.1">
    <molecule id="Q96FG2-6"/>
    <property type="nucleotide sequence ID" value="XM_047445968.1"/>
</dbReference>
<dbReference type="RefSeq" id="XP_047301925.1">
    <molecule id="Q96FG2-6"/>
    <property type="nucleotide sequence ID" value="XM_047445969.1"/>
</dbReference>
<dbReference type="RefSeq" id="XP_047301927.1">
    <molecule id="Q96FG2-1"/>
    <property type="nucleotide sequence ID" value="XM_047445971.1"/>
</dbReference>
<dbReference type="RefSeq" id="XP_047301928.1">
    <molecule id="Q96FG2-1"/>
    <property type="nucleotide sequence ID" value="XM_047445972.1"/>
</dbReference>
<dbReference type="RefSeq" id="XP_047301929.1">
    <molecule id="Q96FG2-1"/>
    <property type="nucleotide sequence ID" value="XM_047445973.1"/>
</dbReference>
<dbReference type="RefSeq" id="XP_047301930.1">
    <molecule id="Q96FG2-1"/>
    <property type="nucleotide sequence ID" value="XM_047445974.1"/>
</dbReference>
<dbReference type="RefSeq" id="XP_047301931.1">
    <molecule id="Q96FG2-1"/>
    <property type="nucleotide sequence ID" value="XM_047445975.1"/>
</dbReference>
<dbReference type="RefSeq" id="XP_047301932.1">
    <molecule id="Q96FG2-1"/>
    <property type="nucleotide sequence ID" value="XM_047445976.1"/>
</dbReference>
<dbReference type="RefSeq" id="XP_047301933.1">
    <molecule id="Q96FG2-2"/>
    <property type="nucleotide sequence ID" value="XM_047445977.1"/>
</dbReference>
<dbReference type="RefSeq" id="XP_047301934.1">
    <molecule id="Q96FG2-2"/>
    <property type="nucleotide sequence ID" value="XM_047445978.1"/>
</dbReference>
<dbReference type="RefSeq" id="XP_054200098.1">
    <molecule id="Q96FG2-6"/>
    <property type="nucleotide sequence ID" value="XM_054344123.1"/>
</dbReference>
<dbReference type="RefSeq" id="XP_054200099.1">
    <molecule id="Q96FG2-6"/>
    <property type="nucleotide sequence ID" value="XM_054344124.1"/>
</dbReference>
<dbReference type="RefSeq" id="XP_054200100.1">
    <molecule id="Q96FG2-6"/>
    <property type="nucleotide sequence ID" value="XM_054344125.1"/>
</dbReference>
<dbReference type="RefSeq" id="XP_054200101.1">
    <molecule id="Q96FG2-6"/>
    <property type="nucleotide sequence ID" value="XM_054344126.1"/>
</dbReference>
<dbReference type="RefSeq" id="XP_054200102.1">
    <molecule id="Q96FG2-6"/>
    <property type="nucleotide sequence ID" value="XM_054344127.1"/>
</dbReference>
<dbReference type="RefSeq" id="XP_054200103.1">
    <molecule id="Q96FG2-6"/>
    <property type="nucleotide sequence ID" value="XM_054344128.1"/>
</dbReference>
<dbReference type="RefSeq" id="XP_054200104.1">
    <molecule id="Q96FG2-6"/>
    <property type="nucleotide sequence ID" value="XM_054344129.1"/>
</dbReference>
<dbReference type="RefSeq" id="XP_054200105.1">
    <molecule id="Q96FG2-6"/>
    <property type="nucleotide sequence ID" value="XM_054344130.1"/>
</dbReference>
<dbReference type="RefSeq" id="XP_054200106.1">
    <molecule id="Q96FG2-6"/>
    <property type="nucleotide sequence ID" value="XM_054344131.1"/>
</dbReference>
<dbReference type="RefSeq" id="XP_054200107.1">
    <molecule id="Q96FG2-6"/>
    <property type="nucleotide sequence ID" value="XM_054344132.1"/>
</dbReference>
<dbReference type="RefSeq" id="XP_054200108.1">
    <molecule id="Q96FG2-6"/>
    <property type="nucleotide sequence ID" value="XM_054344133.1"/>
</dbReference>
<dbReference type="RefSeq" id="XP_054200109.1">
    <molecule id="Q96FG2-1"/>
    <property type="nucleotide sequence ID" value="XM_054344134.1"/>
</dbReference>
<dbReference type="RefSeq" id="XP_054200110.1">
    <molecule id="Q96FG2-1"/>
    <property type="nucleotide sequence ID" value="XM_054344135.1"/>
</dbReference>
<dbReference type="RefSeq" id="XP_054200111.1">
    <molecule id="Q96FG2-1"/>
    <property type="nucleotide sequence ID" value="XM_054344136.1"/>
</dbReference>
<dbReference type="RefSeq" id="XP_054200112.1">
    <molecule id="Q96FG2-1"/>
    <property type="nucleotide sequence ID" value="XM_054344137.1"/>
</dbReference>
<dbReference type="RefSeq" id="XP_054200113.1">
    <molecule id="Q96FG2-1"/>
    <property type="nucleotide sequence ID" value="XM_054344138.1"/>
</dbReference>
<dbReference type="RefSeq" id="XP_054200114.1">
    <molecule id="Q96FG2-1"/>
    <property type="nucleotide sequence ID" value="XM_054344139.1"/>
</dbReference>
<dbReference type="RefSeq" id="XP_054200115.1">
    <molecule id="Q96FG2-2"/>
    <property type="nucleotide sequence ID" value="XM_054344140.1"/>
</dbReference>
<dbReference type="RefSeq" id="XP_054200116.1">
    <molecule id="Q96FG2-2"/>
    <property type="nucleotide sequence ID" value="XM_054344141.1"/>
</dbReference>
<dbReference type="BioGRID" id="123927">
    <property type="interactions" value="16"/>
</dbReference>
<dbReference type="FunCoup" id="Q96FG2">
    <property type="interactions" value="892"/>
</dbReference>
<dbReference type="IntAct" id="Q96FG2">
    <property type="interactions" value="5"/>
</dbReference>
<dbReference type="MINT" id="Q96FG2"/>
<dbReference type="STRING" id="9606.ENSP00000386248"/>
<dbReference type="GlyGen" id="Q96FG2">
    <property type="glycosylation" value="1 site, 1 O-linked glycan (1 site)"/>
</dbReference>
<dbReference type="iPTMnet" id="Q96FG2"/>
<dbReference type="PhosphoSitePlus" id="Q96FG2"/>
<dbReference type="BioMuta" id="ELMOD3"/>
<dbReference type="DMDM" id="313104101"/>
<dbReference type="MassIVE" id="Q96FG2"/>
<dbReference type="PaxDb" id="9606-ENSP00000318264"/>
<dbReference type="PeptideAtlas" id="Q96FG2"/>
<dbReference type="ProteomicsDB" id="76524">
    <molecule id="Q96FG2-1"/>
</dbReference>
<dbReference type="ProteomicsDB" id="76525">
    <molecule id="Q96FG2-2"/>
</dbReference>
<dbReference type="ProteomicsDB" id="76526">
    <molecule id="Q96FG2-3"/>
</dbReference>
<dbReference type="ProteomicsDB" id="76527">
    <molecule id="Q96FG2-5"/>
</dbReference>
<dbReference type="ProteomicsDB" id="76528">
    <molecule id="Q96FG2-6"/>
</dbReference>
<dbReference type="Antibodypedia" id="1572">
    <property type="antibodies" value="85 antibodies from 23 providers"/>
</dbReference>
<dbReference type="DNASU" id="84173"/>
<dbReference type="Ensembl" id="ENST00000315658.11">
    <molecule id="Q96FG2-6"/>
    <property type="protein sequence ID" value="ENSP00000318264.7"/>
    <property type="gene ID" value="ENSG00000115459.18"/>
</dbReference>
<dbReference type="Ensembl" id="ENST00000393852.8">
    <molecule id="Q96FG2-1"/>
    <property type="protein sequence ID" value="ENSP00000377434.4"/>
    <property type="gene ID" value="ENSG00000115459.18"/>
</dbReference>
<dbReference type="Ensembl" id="ENST00000409013.8">
    <molecule id="Q96FG2-1"/>
    <property type="protein sequence ID" value="ENSP00000387139.3"/>
    <property type="gene ID" value="ENSG00000115459.18"/>
</dbReference>
<dbReference type="Ensembl" id="ENST00000409344.7">
    <molecule id="Q96FG2-1"/>
    <property type="protein sequence ID" value="ENSP00000386248.3"/>
    <property type="gene ID" value="ENSG00000115459.18"/>
</dbReference>
<dbReference type="Ensembl" id="ENST00000409890.6">
    <molecule id="Q96FG2-1"/>
    <property type="protein sequence ID" value="ENSP00000386304.2"/>
    <property type="gene ID" value="ENSG00000115459.18"/>
</dbReference>
<dbReference type="Ensembl" id="ENST00000410106.5">
    <molecule id="Q96FG2-5"/>
    <property type="protein sequence ID" value="ENSP00000387134.1"/>
    <property type="gene ID" value="ENSG00000115459.18"/>
</dbReference>
<dbReference type="Ensembl" id="ENST00000414593.5">
    <molecule id="Q96FG2-3"/>
    <property type="protein sequence ID" value="ENSP00000394774.1"/>
    <property type="gene ID" value="ENSG00000115459.18"/>
</dbReference>
<dbReference type="Ensembl" id="ENST00000444108.7">
    <molecule id="Q96FG2-2"/>
    <property type="protein sequence ID" value="ENSP00000401984.2"/>
    <property type="gene ID" value="ENSG00000115459.18"/>
</dbReference>
<dbReference type="Ensembl" id="ENST00000446464.7">
    <molecule id="Q96FG2-2"/>
    <property type="protein sequence ID" value="ENSP00000407599.3"/>
    <property type="gene ID" value="ENSG00000115459.18"/>
</dbReference>
<dbReference type="GeneID" id="84173"/>
<dbReference type="KEGG" id="hsa:84173"/>
<dbReference type="MANE-Select" id="ENST00000409013.8">
    <property type="protein sequence ID" value="ENSP00000387139.3"/>
    <property type="RefSeq nucleotide sequence ID" value="NM_001135022.2"/>
    <property type="RefSeq protein sequence ID" value="NP_001128494.1"/>
</dbReference>
<dbReference type="UCSC" id="uc002spf.5">
    <molecule id="Q96FG2-1"/>
    <property type="organism name" value="human"/>
</dbReference>
<dbReference type="AGR" id="HGNC:26158"/>
<dbReference type="CTD" id="84173"/>
<dbReference type="DisGeNET" id="84173"/>
<dbReference type="GeneCards" id="ELMOD3"/>
<dbReference type="HGNC" id="HGNC:26158">
    <property type="gene designation" value="ELMOD3"/>
</dbReference>
<dbReference type="HPA" id="ENSG00000115459">
    <property type="expression patterns" value="Low tissue specificity"/>
</dbReference>
<dbReference type="MalaCards" id="ELMOD3"/>
<dbReference type="MIM" id="615427">
    <property type="type" value="gene"/>
</dbReference>
<dbReference type="MIM" id="615429">
    <property type="type" value="phenotype"/>
</dbReference>
<dbReference type="MIM" id="619500">
    <property type="type" value="phenotype"/>
</dbReference>
<dbReference type="neXtProt" id="NX_Q96FG2"/>
<dbReference type="OpenTargets" id="ENSG00000115459"/>
<dbReference type="Orphanet" id="90636">
    <property type="disease" value="Rare autosomal recessive non-syndromic sensorineural deafness type DFNB"/>
</dbReference>
<dbReference type="PharmGKB" id="PA164719009"/>
<dbReference type="VEuPathDB" id="HostDB:ENSG00000115459"/>
<dbReference type="eggNOG" id="KOG2998">
    <property type="taxonomic scope" value="Eukaryota"/>
</dbReference>
<dbReference type="GeneTree" id="ENSGT00390000009488"/>
<dbReference type="HOGENOM" id="CLU_060970_0_0_1"/>
<dbReference type="InParanoid" id="Q96FG2"/>
<dbReference type="OMA" id="PHWENIG"/>
<dbReference type="OrthoDB" id="266227at2759"/>
<dbReference type="PAN-GO" id="Q96FG2">
    <property type="GO annotations" value="1 GO annotation based on evolutionary models"/>
</dbReference>
<dbReference type="PhylomeDB" id="Q96FG2"/>
<dbReference type="TreeFam" id="TF323472"/>
<dbReference type="PathwayCommons" id="Q96FG2"/>
<dbReference type="SignaLink" id="Q96FG2"/>
<dbReference type="BioGRID-ORCS" id="84173">
    <property type="hits" value="30 hits in 1160 CRISPR screens"/>
</dbReference>
<dbReference type="ChiTaRS" id="ELMOD3">
    <property type="organism name" value="human"/>
</dbReference>
<dbReference type="GenomeRNAi" id="84173"/>
<dbReference type="Pharos" id="Q96FG2">
    <property type="development level" value="Tbio"/>
</dbReference>
<dbReference type="PRO" id="PR:Q96FG2"/>
<dbReference type="Proteomes" id="UP000005640">
    <property type="component" value="Chromosome 2"/>
</dbReference>
<dbReference type="RNAct" id="Q96FG2">
    <property type="molecule type" value="protein"/>
</dbReference>
<dbReference type="Bgee" id="ENSG00000115459">
    <property type="expression patterns" value="Expressed in subcutaneous adipose tissue and 121 other cell types or tissues"/>
</dbReference>
<dbReference type="ExpressionAtlas" id="Q96FG2">
    <property type="expression patterns" value="baseline and differential"/>
</dbReference>
<dbReference type="GO" id="GO:0005856">
    <property type="term" value="C:cytoskeleton"/>
    <property type="evidence" value="ECO:0007669"/>
    <property type="project" value="UniProtKB-SubCell"/>
</dbReference>
<dbReference type="GO" id="GO:0005794">
    <property type="term" value="C:Golgi apparatus"/>
    <property type="evidence" value="ECO:0007669"/>
    <property type="project" value="Ensembl"/>
</dbReference>
<dbReference type="GO" id="GO:0060091">
    <property type="term" value="C:kinocilium"/>
    <property type="evidence" value="ECO:0007669"/>
    <property type="project" value="UniProtKB-SubCell"/>
</dbReference>
<dbReference type="GO" id="GO:0032420">
    <property type="term" value="C:stereocilium"/>
    <property type="evidence" value="ECO:0007669"/>
    <property type="project" value="UniProtKB-SubCell"/>
</dbReference>
<dbReference type="GO" id="GO:0060117">
    <property type="term" value="P:auditory receptor cell development"/>
    <property type="evidence" value="ECO:0007669"/>
    <property type="project" value="Ensembl"/>
</dbReference>
<dbReference type="GO" id="GO:0060271">
    <property type="term" value="P:cilium assembly"/>
    <property type="evidence" value="ECO:0007669"/>
    <property type="project" value="Ensembl"/>
</dbReference>
<dbReference type="GO" id="GO:0007010">
    <property type="term" value="P:cytoskeleton organization"/>
    <property type="evidence" value="ECO:0007669"/>
    <property type="project" value="Ensembl"/>
</dbReference>
<dbReference type="GO" id="GO:0010467">
    <property type="term" value="P:gene expression"/>
    <property type="evidence" value="ECO:0007669"/>
    <property type="project" value="Ensembl"/>
</dbReference>
<dbReference type="GO" id="GO:0015031">
    <property type="term" value="P:protein transport"/>
    <property type="evidence" value="ECO:0007669"/>
    <property type="project" value="Ensembl"/>
</dbReference>
<dbReference type="GO" id="GO:0007605">
    <property type="term" value="P:sensory perception of sound"/>
    <property type="evidence" value="ECO:0007669"/>
    <property type="project" value="Ensembl"/>
</dbReference>
<dbReference type="GO" id="GO:0120045">
    <property type="term" value="P:stereocilium maintenance"/>
    <property type="evidence" value="ECO:0007669"/>
    <property type="project" value="Ensembl"/>
</dbReference>
<dbReference type="InterPro" id="IPR006816">
    <property type="entry name" value="ELMO_dom"/>
</dbReference>
<dbReference type="InterPro" id="IPR050868">
    <property type="entry name" value="ELMO_domain-containing"/>
</dbReference>
<dbReference type="PANTHER" id="PTHR12771:SF2">
    <property type="entry name" value="ELMO DOMAIN-CONTAINING PROTEIN 3"/>
    <property type="match status" value="1"/>
</dbReference>
<dbReference type="PANTHER" id="PTHR12771">
    <property type="entry name" value="ENGULFMENT AND CELL MOTILITY"/>
    <property type="match status" value="1"/>
</dbReference>
<dbReference type="Pfam" id="PF04727">
    <property type="entry name" value="ELMO_CED12"/>
    <property type="match status" value="1"/>
</dbReference>
<dbReference type="PROSITE" id="PS51335">
    <property type="entry name" value="ELMO"/>
    <property type="match status" value="1"/>
</dbReference>
<organism>
    <name type="scientific">Homo sapiens</name>
    <name type="common">Human</name>
    <dbReference type="NCBI Taxonomy" id="9606"/>
    <lineage>
        <taxon>Eukaryota</taxon>
        <taxon>Metazoa</taxon>
        <taxon>Chordata</taxon>
        <taxon>Craniata</taxon>
        <taxon>Vertebrata</taxon>
        <taxon>Euteleostomi</taxon>
        <taxon>Mammalia</taxon>
        <taxon>Eutheria</taxon>
        <taxon>Euarchontoglires</taxon>
        <taxon>Primates</taxon>
        <taxon>Haplorrhini</taxon>
        <taxon>Catarrhini</taxon>
        <taxon>Hominidae</taxon>
        <taxon>Homo</taxon>
    </lineage>
</organism>
<proteinExistence type="evidence at protein level"/>
<keyword id="KW-0025">Alternative splicing</keyword>
<keyword id="KW-0966">Cell projection</keyword>
<keyword id="KW-0969">Cilium</keyword>
<keyword id="KW-0963">Cytoplasm</keyword>
<keyword id="KW-0206">Cytoskeleton</keyword>
<keyword id="KW-0209">Deafness</keyword>
<keyword id="KW-0343">GTPase activation</keyword>
<keyword id="KW-1010">Non-syndromic deafness</keyword>
<keyword id="KW-1267">Proteomics identification</keyword>
<keyword id="KW-1185">Reference proteome</keyword>
<protein>
    <recommendedName>
        <fullName>ELMO domain-containing protein 3</fullName>
    </recommendedName>
    <alternativeName>
        <fullName>RNA-binding motif and ELMO domain-containing protein 1</fullName>
    </alternativeName>
    <alternativeName>
        <fullName>RNA-binding motif protein 29</fullName>
    </alternativeName>
    <alternativeName>
        <fullName>RNA-binding protein 29</fullName>
    </alternativeName>
</protein>